<feature type="chain" id="PRO_1000071380" description="Aspartyl/glutamyl-tRNA(Asn/Gln) amidotransferase subunit C">
    <location>
        <begin position="1"/>
        <end position="97"/>
    </location>
</feature>
<name>GATC_ANADE</name>
<comment type="function">
    <text evidence="1">Allows the formation of correctly charged Asn-tRNA(Asn) or Gln-tRNA(Gln) through the transamidation of misacylated Asp-tRNA(Asn) or Glu-tRNA(Gln) in organisms which lack either or both of asparaginyl-tRNA or glutaminyl-tRNA synthetases. The reaction takes place in the presence of glutamine and ATP through an activated phospho-Asp-tRNA(Asn) or phospho-Glu-tRNA(Gln).</text>
</comment>
<comment type="catalytic activity">
    <reaction evidence="1">
        <text>L-glutamyl-tRNA(Gln) + L-glutamine + ATP + H2O = L-glutaminyl-tRNA(Gln) + L-glutamate + ADP + phosphate + H(+)</text>
        <dbReference type="Rhea" id="RHEA:17521"/>
        <dbReference type="Rhea" id="RHEA-COMP:9681"/>
        <dbReference type="Rhea" id="RHEA-COMP:9684"/>
        <dbReference type="ChEBI" id="CHEBI:15377"/>
        <dbReference type="ChEBI" id="CHEBI:15378"/>
        <dbReference type="ChEBI" id="CHEBI:29985"/>
        <dbReference type="ChEBI" id="CHEBI:30616"/>
        <dbReference type="ChEBI" id="CHEBI:43474"/>
        <dbReference type="ChEBI" id="CHEBI:58359"/>
        <dbReference type="ChEBI" id="CHEBI:78520"/>
        <dbReference type="ChEBI" id="CHEBI:78521"/>
        <dbReference type="ChEBI" id="CHEBI:456216"/>
    </reaction>
</comment>
<comment type="catalytic activity">
    <reaction evidence="1">
        <text>L-aspartyl-tRNA(Asn) + L-glutamine + ATP + H2O = L-asparaginyl-tRNA(Asn) + L-glutamate + ADP + phosphate + 2 H(+)</text>
        <dbReference type="Rhea" id="RHEA:14513"/>
        <dbReference type="Rhea" id="RHEA-COMP:9674"/>
        <dbReference type="Rhea" id="RHEA-COMP:9677"/>
        <dbReference type="ChEBI" id="CHEBI:15377"/>
        <dbReference type="ChEBI" id="CHEBI:15378"/>
        <dbReference type="ChEBI" id="CHEBI:29985"/>
        <dbReference type="ChEBI" id="CHEBI:30616"/>
        <dbReference type="ChEBI" id="CHEBI:43474"/>
        <dbReference type="ChEBI" id="CHEBI:58359"/>
        <dbReference type="ChEBI" id="CHEBI:78515"/>
        <dbReference type="ChEBI" id="CHEBI:78516"/>
        <dbReference type="ChEBI" id="CHEBI:456216"/>
    </reaction>
</comment>
<comment type="subunit">
    <text evidence="1">Heterotrimer of A, B and C subunits.</text>
</comment>
<comment type="similarity">
    <text evidence="1">Belongs to the GatC family.</text>
</comment>
<gene>
    <name evidence="1" type="primary">gatC</name>
    <name type="ordered locus">Adeh_4189</name>
</gene>
<dbReference type="EC" id="6.3.5.-" evidence="1"/>
<dbReference type="EMBL" id="CP000251">
    <property type="protein sequence ID" value="ABC83953.1"/>
    <property type="molecule type" value="Genomic_DNA"/>
</dbReference>
<dbReference type="RefSeq" id="WP_011423235.1">
    <property type="nucleotide sequence ID" value="NC_007760.1"/>
</dbReference>
<dbReference type="SMR" id="Q2IH93"/>
<dbReference type="STRING" id="290397.Adeh_4189"/>
<dbReference type="KEGG" id="ade:Adeh_4189"/>
<dbReference type="eggNOG" id="COG0721">
    <property type="taxonomic scope" value="Bacteria"/>
</dbReference>
<dbReference type="HOGENOM" id="CLU_105899_1_2_7"/>
<dbReference type="OrthoDB" id="9813938at2"/>
<dbReference type="Proteomes" id="UP000001935">
    <property type="component" value="Chromosome"/>
</dbReference>
<dbReference type="GO" id="GO:0050566">
    <property type="term" value="F:asparaginyl-tRNA synthase (glutamine-hydrolyzing) activity"/>
    <property type="evidence" value="ECO:0007669"/>
    <property type="project" value="RHEA"/>
</dbReference>
<dbReference type="GO" id="GO:0005524">
    <property type="term" value="F:ATP binding"/>
    <property type="evidence" value="ECO:0007669"/>
    <property type="project" value="UniProtKB-KW"/>
</dbReference>
<dbReference type="GO" id="GO:0050567">
    <property type="term" value="F:glutaminyl-tRNA synthase (glutamine-hydrolyzing) activity"/>
    <property type="evidence" value="ECO:0007669"/>
    <property type="project" value="UniProtKB-UniRule"/>
</dbReference>
<dbReference type="GO" id="GO:0070681">
    <property type="term" value="P:glutaminyl-tRNAGln biosynthesis via transamidation"/>
    <property type="evidence" value="ECO:0007669"/>
    <property type="project" value="TreeGrafter"/>
</dbReference>
<dbReference type="GO" id="GO:0006450">
    <property type="term" value="P:regulation of translational fidelity"/>
    <property type="evidence" value="ECO:0007669"/>
    <property type="project" value="InterPro"/>
</dbReference>
<dbReference type="GO" id="GO:0006412">
    <property type="term" value="P:translation"/>
    <property type="evidence" value="ECO:0007669"/>
    <property type="project" value="UniProtKB-UniRule"/>
</dbReference>
<dbReference type="Gene3D" id="1.10.20.60">
    <property type="entry name" value="Glu-tRNAGln amidotransferase C subunit, N-terminal domain"/>
    <property type="match status" value="1"/>
</dbReference>
<dbReference type="HAMAP" id="MF_00122">
    <property type="entry name" value="GatC"/>
    <property type="match status" value="1"/>
</dbReference>
<dbReference type="InterPro" id="IPR036113">
    <property type="entry name" value="Asp/Glu-ADT_sf_sub_c"/>
</dbReference>
<dbReference type="InterPro" id="IPR003837">
    <property type="entry name" value="GatC"/>
</dbReference>
<dbReference type="NCBIfam" id="TIGR00135">
    <property type="entry name" value="gatC"/>
    <property type="match status" value="1"/>
</dbReference>
<dbReference type="PANTHER" id="PTHR15004">
    <property type="entry name" value="GLUTAMYL-TRNA(GLN) AMIDOTRANSFERASE SUBUNIT C, MITOCHONDRIAL"/>
    <property type="match status" value="1"/>
</dbReference>
<dbReference type="PANTHER" id="PTHR15004:SF0">
    <property type="entry name" value="GLUTAMYL-TRNA(GLN) AMIDOTRANSFERASE SUBUNIT C, MITOCHONDRIAL"/>
    <property type="match status" value="1"/>
</dbReference>
<dbReference type="Pfam" id="PF02686">
    <property type="entry name" value="GatC"/>
    <property type="match status" value="1"/>
</dbReference>
<dbReference type="SUPFAM" id="SSF141000">
    <property type="entry name" value="Glu-tRNAGln amidotransferase C subunit"/>
    <property type="match status" value="1"/>
</dbReference>
<proteinExistence type="inferred from homology"/>
<evidence type="ECO:0000255" key="1">
    <source>
        <dbReference type="HAMAP-Rule" id="MF_00122"/>
    </source>
</evidence>
<accession>Q2IH93</accession>
<sequence>MALSLEEVRRIAQLARLRLSEEEERTFAGQLSAILDHVRQLEELDVTAVEPMTHALAAGELPALREDAVRASLAPEEATAAAPAREGTAFKVPRIIE</sequence>
<reference key="1">
    <citation type="submission" date="2006-01" db="EMBL/GenBank/DDBJ databases">
        <title>Complete sequence of Anaeromyxobacter dehalogenans 2CP-C.</title>
        <authorList>
            <person name="Copeland A."/>
            <person name="Lucas S."/>
            <person name="Lapidus A."/>
            <person name="Barry K."/>
            <person name="Detter J.C."/>
            <person name="Glavina T."/>
            <person name="Hammon N."/>
            <person name="Israni S."/>
            <person name="Pitluck S."/>
            <person name="Brettin T."/>
            <person name="Bruce D."/>
            <person name="Han C."/>
            <person name="Tapia R."/>
            <person name="Gilna P."/>
            <person name="Kiss H."/>
            <person name="Schmutz J."/>
            <person name="Larimer F."/>
            <person name="Land M."/>
            <person name="Kyrpides N."/>
            <person name="Anderson I."/>
            <person name="Sanford R.A."/>
            <person name="Ritalahti K.M."/>
            <person name="Thomas H.S."/>
            <person name="Kirby J.R."/>
            <person name="Zhulin I.B."/>
            <person name="Loeffler F.E."/>
            <person name="Richardson P."/>
        </authorList>
    </citation>
    <scope>NUCLEOTIDE SEQUENCE [LARGE SCALE GENOMIC DNA]</scope>
    <source>
        <strain>2CP-C</strain>
    </source>
</reference>
<protein>
    <recommendedName>
        <fullName evidence="1">Aspartyl/glutamyl-tRNA(Asn/Gln) amidotransferase subunit C</fullName>
        <shortName evidence="1">Asp/Glu-ADT subunit C</shortName>
        <ecNumber evidence="1">6.3.5.-</ecNumber>
    </recommendedName>
</protein>
<organism>
    <name type="scientific">Anaeromyxobacter dehalogenans (strain 2CP-C)</name>
    <dbReference type="NCBI Taxonomy" id="290397"/>
    <lineage>
        <taxon>Bacteria</taxon>
        <taxon>Pseudomonadati</taxon>
        <taxon>Myxococcota</taxon>
        <taxon>Myxococcia</taxon>
        <taxon>Myxococcales</taxon>
        <taxon>Cystobacterineae</taxon>
        <taxon>Anaeromyxobacteraceae</taxon>
        <taxon>Anaeromyxobacter</taxon>
    </lineage>
</organism>
<keyword id="KW-0067">ATP-binding</keyword>
<keyword id="KW-0436">Ligase</keyword>
<keyword id="KW-0547">Nucleotide-binding</keyword>
<keyword id="KW-0648">Protein biosynthesis</keyword>
<keyword id="KW-1185">Reference proteome</keyword>